<feature type="chain" id="PRO_0000356753" description="Large ribosomal subunit protein bL33A">
    <location>
        <begin position="1"/>
        <end position="54"/>
    </location>
</feature>
<sequence>MARNEVRPVIKLRSTAGTGYTYVTRKNRRNDPDRMVLRKYDPVARRHVDFREER</sequence>
<evidence type="ECO:0000255" key="1">
    <source>
        <dbReference type="HAMAP-Rule" id="MF_00294"/>
    </source>
</evidence>
<dbReference type="EMBL" id="AP009493">
    <property type="protein sequence ID" value="BAG17375.1"/>
    <property type="molecule type" value="Genomic_DNA"/>
</dbReference>
<dbReference type="SMR" id="B1VRF7"/>
<dbReference type="KEGG" id="sgr:SGR_546"/>
<dbReference type="eggNOG" id="COG0267">
    <property type="taxonomic scope" value="Bacteria"/>
</dbReference>
<dbReference type="HOGENOM" id="CLU_190949_1_1_11"/>
<dbReference type="Proteomes" id="UP000001685">
    <property type="component" value="Chromosome"/>
</dbReference>
<dbReference type="GO" id="GO:0022625">
    <property type="term" value="C:cytosolic large ribosomal subunit"/>
    <property type="evidence" value="ECO:0007669"/>
    <property type="project" value="TreeGrafter"/>
</dbReference>
<dbReference type="GO" id="GO:0003735">
    <property type="term" value="F:structural constituent of ribosome"/>
    <property type="evidence" value="ECO:0007669"/>
    <property type="project" value="InterPro"/>
</dbReference>
<dbReference type="GO" id="GO:0006412">
    <property type="term" value="P:translation"/>
    <property type="evidence" value="ECO:0007669"/>
    <property type="project" value="UniProtKB-UniRule"/>
</dbReference>
<dbReference type="FunFam" id="2.20.28.120:FF:000002">
    <property type="entry name" value="50S ribosomal protein L33"/>
    <property type="match status" value="1"/>
</dbReference>
<dbReference type="Gene3D" id="2.20.28.120">
    <property type="entry name" value="Ribosomal protein L33"/>
    <property type="match status" value="1"/>
</dbReference>
<dbReference type="HAMAP" id="MF_00294">
    <property type="entry name" value="Ribosomal_bL33"/>
    <property type="match status" value="1"/>
</dbReference>
<dbReference type="InterPro" id="IPR001705">
    <property type="entry name" value="Ribosomal_bL33"/>
</dbReference>
<dbReference type="InterPro" id="IPR018264">
    <property type="entry name" value="Ribosomal_bL33_CS"/>
</dbReference>
<dbReference type="InterPro" id="IPR038584">
    <property type="entry name" value="Ribosomal_bL33_sf"/>
</dbReference>
<dbReference type="InterPro" id="IPR011332">
    <property type="entry name" value="Ribosomal_zn-bd"/>
</dbReference>
<dbReference type="NCBIfam" id="NF001860">
    <property type="entry name" value="PRK00595.1"/>
    <property type="match status" value="1"/>
</dbReference>
<dbReference type="NCBIfam" id="TIGR01023">
    <property type="entry name" value="rpmG_bact"/>
    <property type="match status" value="1"/>
</dbReference>
<dbReference type="PANTHER" id="PTHR15238">
    <property type="entry name" value="54S RIBOSOMAL PROTEIN L39, MITOCHONDRIAL"/>
    <property type="match status" value="1"/>
</dbReference>
<dbReference type="PANTHER" id="PTHR15238:SF1">
    <property type="entry name" value="LARGE RIBOSOMAL SUBUNIT PROTEIN BL33M"/>
    <property type="match status" value="1"/>
</dbReference>
<dbReference type="Pfam" id="PF00471">
    <property type="entry name" value="Ribosomal_L33"/>
    <property type="match status" value="1"/>
</dbReference>
<dbReference type="SUPFAM" id="SSF57829">
    <property type="entry name" value="Zn-binding ribosomal proteins"/>
    <property type="match status" value="1"/>
</dbReference>
<dbReference type="PROSITE" id="PS00582">
    <property type="entry name" value="RIBOSOMAL_L33"/>
    <property type="match status" value="1"/>
</dbReference>
<keyword id="KW-0687">Ribonucleoprotein</keyword>
<keyword id="KW-0689">Ribosomal protein</keyword>
<organism>
    <name type="scientific">Streptomyces griseus subsp. griseus (strain JCM 4626 / CBS 651.72 / NBRC 13350 / KCC S-0626 / ISP 5235)</name>
    <dbReference type="NCBI Taxonomy" id="455632"/>
    <lineage>
        <taxon>Bacteria</taxon>
        <taxon>Bacillati</taxon>
        <taxon>Actinomycetota</taxon>
        <taxon>Actinomycetes</taxon>
        <taxon>Kitasatosporales</taxon>
        <taxon>Streptomycetaceae</taxon>
        <taxon>Streptomyces</taxon>
    </lineage>
</organism>
<accession>B1VRF7</accession>
<reference key="1">
    <citation type="journal article" date="2008" name="J. Bacteriol.">
        <title>Genome sequence of the streptomycin-producing microorganism Streptomyces griseus IFO 13350.</title>
        <authorList>
            <person name="Ohnishi Y."/>
            <person name="Ishikawa J."/>
            <person name="Hara H."/>
            <person name="Suzuki H."/>
            <person name="Ikenoya M."/>
            <person name="Ikeda H."/>
            <person name="Yamashita A."/>
            <person name="Hattori M."/>
            <person name="Horinouchi S."/>
        </authorList>
    </citation>
    <scope>NUCLEOTIDE SEQUENCE [LARGE SCALE GENOMIC DNA]</scope>
    <source>
        <strain>JCM 4626 / CBS 651.72 / NBRC 13350 / KCC S-0626 / ISP 5235</strain>
    </source>
</reference>
<protein>
    <recommendedName>
        <fullName evidence="1">Large ribosomal subunit protein bL33A</fullName>
    </recommendedName>
    <alternativeName>
        <fullName evidence="1">50S ribosomal protein L33 1</fullName>
    </alternativeName>
</protein>
<comment type="similarity">
    <text evidence="1">Belongs to the bacterial ribosomal protein bL33 family.</text>
</comment>
<proteinExistence type="inferred from homology"/>
<name>RL331_STRGG</name>
<gene>
    <name evidence="1" type="primary">rpmG1</name>
    <name type="ordered locus">SGR_546</name>
</gene>